<dbReference type="GO" id="GO:0005576">
    <property type="term" value="C:extracellular region"/>
    <property type="evidence" value="ECO:0007669"/>
    <property type="project" value="UniProtKB-SubCell"/>
</dbReference>
<dbReference type="GO" id="GO:0007218">
    <property type="term" value="P:neuropeptide signaling pathway"/>
    <property type="evidence" value="ECO:0007669"/>
    <property type="project" value="UniProtKB-KW"/>
</dbReference>
<accession>B0M3C9</accession>
<protein>
    <recommendedName>
        <fullName evidence="4">Extended FMRFamide-4</fullName>
        <shortName evidence="4">FMRFa-4</shortName>
    </recommendedName>
</protein>
<sequence length="9" mass="993">GVDSSFLRL</sequence>
<name>FAR4_MANKU</name>
<evidence type="ECO:0000250" key="1">
    <source>
        <dbReference type="UniProtKB" id="P34405"/>
    </source>
</evidence>
<evidence type="ECO:0000255" key="2"/>
<evidence type="ECO:0000269" key="3">
    <source>
    </source>
</evidence>
<evidence type="ECO:0000303" key="4">
    <source>
    </source>
</evidence>
<evidence type="ECO:0000305" key="5"/>
<evidence type="ECO:0000305" key="6">
    <source>
    </source>
</evidence>
<feature type="peptide" id="PRO_0000420775" description="Extended FMRFamide-4" evidence="3">
    <location>
        <begin position="1"/>
        <end position="9"/>
    </location>
</feature>
<feature type="modified residue" description="Leucine amide" evidence="3">
    <location>
        <position position="9"/>
    </location>
</feature>
<feature type="unsure residue" description="L or I" evidence="3">
    <location>
        <position position="7"/>
    </location>
</feature>
<feature type="unsure residue" description="L or I" evidence="3">
    <location>
        <position position="9"/>
    </location>
</feature>
<keyword id="KW-0027">Amidation</keyword>
<keyword id="KW-0903">Direct protein sequencing</keyword>
<keyword id="KW-0527">Neuropeptide</keyword>
<keyword id="KW-0964">Secreted</keyword>
<reference evidence="5" key="1">
    <citation type="journal article" date="2012" name="Syst. Biol.">
        <title>Peptidomics-based phylogeny and biogeography of Mantophasmatodea (Hexapoda).</title>
        <authorList>
            <person name="Predel R."/>
            <person name="Neupert S."/>
            <person name="Huetteroth W."/>
            <person name="Kahnt J."/>
            <person name="Waidelich D."/>
            <person name="Roth S."/>
        </authorList>
    </citation>
    <scope>PROTEIN SEQUENCE</scope>
    <scope>AMIDATION AT LEU-9</scope>
    <source>
        <tissue evidence="3">Thoracic perisympathetic organs</tissue>
    </source>
</reference>
<organism>
    <name type="scientific">Mantophasma kudubergense</name>
    <name type="common">Gladiator</name>
    <name type="synonym">Heel-walker</name>
    <dbReference type="NCBI Taxonomy" id="1037657"/>
    <lineage>
        <taxon>Eukaryota</taxon>
        <taxon>Metazoa</taxon>
        <taxon>Ecdysozoa</taxon>
        <taxon>Arthropoda</taxon>
        <taxon>Hexapoda</taxon>
        <taxon>Insecta</taxon>
        <taxon>Pterygota</taxon>
        <taxon>Neoptera</taxon>
        <taxon>Polyneoptera</taxon>
        <taxon>Mantophasmatodea</taxon>
        <taxon>Mantophasmatidae</taxon>
        <taxon>Mantophasma</taxon>
    </lineage>
</organism>
<proteinExistence type="evidence at protein level"/>
<comment type="function">
    <text evidence="1">FMRFamides and FMRFamide-like peptides are neuropeptides.</text>
</comment>
<comment type="subcellular location">
    <subcellularLocation>
        <location evidence="6">Secreted</location>
    </subcellularLocation>
</comment>
<comment type="similarity">
    <text evidence="2">Belongs to the FARP (FMRF amide related peptide) family.</text>
</comment>